<organism>
    <name type="scientific">Kluyveromyces lactis (strain ATCC 8585 / CBS 2359 / DSM 70799 / NBRC 1267 / NRRL Y-1140 / WM37)</name>
    <name type="common">Yeast</name>
    <name type="synonym">Candida sphaerica</name>
    <dbReference type="NCBI Taxonomy" id="284590"/>
    <lineage>
        <taxon>Eukaryota</taxon>
        <taxon>Fungi</taxon>
        <taxon>Dikarya</taxon>
        <taxon>Ascomycota</taxon>
        <taxon>Saccharomycotina</taxon>
        <taxon>Saccharomycetes</taxon>
        <taxon>Saccharomycetales</taxon>
        <taxon>Saccharomycetaceae</taxon>
        <taxon>Kluyveromyces</taxon>
    </lineage>
</organism>
<reference key="1">
    <citation type="journal article" date="1998" name="Yeast">
        <title>The HIS4 gene from the yeast Kluyveromyces lactis.</title>
        <authorList>
            <person name="Freire-Picos M.A."/>
            <person name="Hampsey M."/>
            <person name="Cerdan M.E."/>
        </authorList>
    </citation>
    <scope>NUCLEOTIDE SEQUENCE [GENOMIC DNA]</scope>
    <source>
        <strain>ATCC 8585 / CBS 2359 / DSM 70799 / NBRC 1267 / NRRL Y-1140 / WM37</strain>
    </source>
</reference>
<reference key="2">
    <citation type="journal article" date="2004" name="Nature">
        <title>Genome evolution in yeasts.</title>
        <authorList>
            <person name="Dujon B."/>
            <person name="Sherman D."/>
            <person name="Fischer G."/>
            <person name="Durrens P."/>
            <person name="Casaregola S."/>
            <person name="Lafontaine I."/>
            <person name="de Montigny J."/>
            <person name="Marck C."/>
            <person name="Neuveglise C."/>
            <person name="Talla E."/>
            <person name="Goffard N."/>
            <person name="Frangeul L."/>
            <person name="Aigle M."/>
            <person name="Anthouard V."/>
            <person name="Babour A."/>
            <person name="Barbe V."/>
            <person name="Barnay S."/>
            <person name="Blanchin S."/>
            <person name="Beckerich J.-M."/>
            <person name="Beyne E."/>
            <person name="Bleykasten C."/>
            <person name="Boisrame A."/>
            <person name="Boyer J."/>
            <person name="Cattolico L."/>
            <person name="Confanioleri F."/>
            <person name="de Daruvar A."/>
            <person name="Despons L."/>
            <person name="Fabre E."/>
            <person name="Fairhead C."/>
            <person name="Ferry-Dumazet H."/>
            <person name="Groppi A."/>
            <person name="Hantraye F."/>
            <person name="Hennequin C."/>
            <person name="Jauniaux N."/>
            <person name="Joyet P."/>
            <person name="Kachouri R."/>
            <person name="Kerrest A."/>
            <person name="Koszul R."/>
            <person name="Lemaire M."/>
            <person name="Lesur I."/>
            <person name="Ma L."/>
            <person name="Muller H."/>
            <person name="Nicaud J.-M."/>
            <person name="Nikolski M."/>
            <person name="Oztas S."/>
            <person name="Ozier-Kalogeropoulos O."/>
            <person name="Pellenz S."/>
            <person name="Potier S."/>
            <person name="Richard G.-F."/>
            <person name="Straub M.-L."/>
            <person name="Suleau A."/>
            <person name="Swennen D."/>
            <person name="Tekaia F."/>
            <person name="Wesolowski-Louvel M."/>
            <person name="Westhof E."/>
            <person name="Wirth B."/>
            <person name="Zeniou-Meyer M."/>
            <person name="Zivanovic Y."/>
            <person name="Bolotin-Fukuhara M."/>
            <person name="Thierry A."/>
            <person name="Bouchier C."/>
            <person name="Caudron B."/>
            <person name="Scarpelli C."/>
            <person name="Gaillardin C."/>
            <person name="Weissenbach J."/>
            <person name="Wincker P."/>
            <person name="Souciet J.-L."/>
        </authorList>
    </citation>
    <scope>NUCLEOTIDE SEQUENCE [LARGE SCALE GENOMIC DNA]</scope>
    <source>
        <strain>ATCC 8585 / CBS 2359 / DSM 70799 / NBRC 1267 / NRRL Y-1140 / WM37</strain>
    </source>
</reference>
<accession>O13471</accession>
<accession>Q6CUX9</accession>
<keyword id="KW-0028">Amino-acid biosynthesis</keyword>
<keyword id="KW-0067">ATP-binding</keyword>
<keyword id="KW-0368">Histidine biosynthesis</keyword>
<keyword id="KW-0378">Hydrolase</keyword>
<keyword id="KW-0479">Metal-binding</keyword>
<keyword id="KW-0511">Multifunctional enzyme</keyword>
<keyword id="KW-0520">NAD</keyword>
<keyword id="KW-0547">Nucleotide-binding</keyword>
<keyword id="KW-0560">Oxidoreductase</keyword>
<keyword id="KW-1185">Reference proteome</keyword>
<keyword id="KW-0862">Zinc</keyword>
<name>HIS2_KLULA</name>
<comment type="catalytic activity">
    <reaction>
        <text>1-(5-phospho-beta-D-ribosyl)-5'-AMP + H2O = 1-(5-phospho-beta-D-ribosyl)-5-[(5-phospho-beta-D-ribosylamino)methylideneamino]imidazole-4-carboxamide</text>
        <dbReference type="Rhea" id="RHEA:20049"/>
        <dbReference type="ChEBI" id="CHEBI:15377"/>
        <dbReference type="ChEBI" id="CHEBI:58435"/>
        <dbReference type="ChEBI" id="CHEBI:59457"/>
        <dbReference type="EC" id="3.5.4.19"/>
    </reaction>
</comment>
<comment type="catalytic activity">
    <reaction>
        <text>1-(5-phospho-beta-D-ribosyl)-ATP + H2O = 1-(5-phospho-beta-D-ribosyl)-5'-AMP + diphosphate + H(+)</text>
        <dbReference type="Rhea" id="RHEA:22828"/>
        <dbReference type="ChEBI" id="CHEBI:15377"/>
        <dbReference type="ChEBI" id="CHEBI:15378"/>
        <dbReference type="ChEBI" id="CHEBI:33019"/>
        <dbReference type="ChEBI" id="CHEBI:59457"/>
        <dbReference type="ChEBI" id="CHEBI:73183"/>
        <dbReference type="EC" id="3.6.1.31"/>
    </reaction>
</comment>
<comment type="catalytic activity">
    <reaction>
        <text>L-histidinol + 2 NAD(+) + H2O = L-histidine + 2 NADH + 3 H(+)</text>
        <dbReference type="Rhea" id="RHEA:20641"/>
        <dbReference type="ChEBI" id="CHEBI:15377"/>
        <dbReference type="ChEBI" id="CHEBI:15378"/>
        <dbReference type="ChEBI" id="CHEBI:57540"/>
        <dbReference type="ChEBI" id="CHEBI:57595"/>
        <dbReference type="ChEBI" id="CHEBI:57699"/>
        <dbReference type="ChEBI" id="CHEBI:57945"/>
        <dbReference type="EC" id="1.1.1.23"/>
    </reaction>
</comment>
<comment type="cofactor">
    <cofactor evidence="1">
        <name>Zn(2+)</name>
        <dbReference type="ChEBI" id="CHEBI:29105"/>
    </cofactor>
    <text evidence="1">Binds 1 zinc ion.</text>
</comment>
<comment type="pathway">
    <text>Amino-acid biosynthesis; L-histidine biosynthesis; L-histidine from 5-phospho-alpha-D-ribose 1-diphosphate: step 2/9.</text>
</comment>
<comment type="pathway">
    <text>Amino-acid biosynthesis; L-histidine biosynthesis; L-histidine from 5-phospho-alpha-D-ribose 1-diphosphate: step 3/9.</text>
</comment>
<comment type="pathway">
    <text>Amino-acid biosynthesis; L-histidine biosynthesis; L-histidine from 5-phospho-alpha-D-ribose 1-diphosphate: step 9/9.</text>
</comment>
<comment type="similarity">
    <text evidence="2">In the C-terminal section; belongs to the histidinol dehydrogenase family.</text>
</comment>
<feature type="chain" id="PRO_0000135910" description="Histidine biosynthesis trifunctional protein">
    <location>
        <begin position="1"/>
        <end position="795"/>
    </location>
</feature>
<feature type="region of interest" description="Phosphoribosyl-AMP cyclohydrolase">
    <location>
        <begin position="1"/>
        <end position="225"/>
    </location>
</feature>
<feature type="region of interest" description="Phosphoribosyl-ATP pyrophosphohydrolase">
    <location>
        <begin position="226"/>
        <end position="308"/>
    </location>
</feature>
<feature type="region of interest" description="Histidinol dehydrogenase">
    <location>
        <begin position="309"/>
        <end position="795"/>
    </location>
</feature>
<feature type="active site" evidence="1">
    <location>
        <position position="683"/>
    </location>
</feature>
<feature type="active site" evidence="1">
    <location>
        <position position="684"/>
    </location>
</feature>
<feature type="binding site" evidence="1">
    <location>
        <position position="614"/>
    </location>
    <ligand>
        <name>Zn(2+)</name>
        <dbReference type="ChEBI" id="CHEBI:29105"/>
    </ligand>
</feature>
<feature type="binding site" evidence="1">
    <location>
        <position position="617"/>
    </location>
    <ligand>
        <name>Zn(2+)</name>
        <dbReference type="ChEBI" id="CHEBI:29105"/>
    </ligand>
</feature>
<feature type="binding site" evidence="1">
    <location>
        <position position="717"/>
    </location>
    <ligand>
        <name>Zn(2+)</name>
        <dbReference type="ChEBI" id="CHEBI:29105"/>
    </ligand>
</feature>
<feature type="binding site" evidence="1">
    <location>
        <position position="776"/>
    </location>
    <ligand>
        <name>Zn(2+)</name>
        <dbReference type="ChEBI" id="CHEBI:29105"/>
    </ligand>
</feature>
<feature type="sequence conflict" description="In Ref. 1; CAA70698." evidence="2" ref="1">
    <original>VY</original>
    <variation>DI</variation>
    <location>
        <begin position="162"/>
        <end position="163"/>
    </location>
</feature>
<feature type="sequence conflict" description="In Ref. 1; CAA70698." evidence="2" ref="1">
    <original>QAL</original>
    <variation>LAI</variation>
    <location>
        <begin position="580"/>
        <end position="582"/>
    </location>
</feature>
<gene>
    <name type="primary">HIS4</name>
    <name type="ordered locus">KLLA0C01452g</name>
</gene>
<dbReference type="EC" id="3.5.4.19"/>
<dbReference type="EC" id="3.6.1.31"/>
<dbReference type="EC" id="1.1.1.23"/>
<dbReference type="EMBL" id="Y09503">
    <property type="protein sequence ID" value="CAA70698.1"/>
    <property type="molecule type" value="Genomic_DNA"/>
</dbReference>
<dbReference type="EMBL" id="CR382123">
    <property type="protein sequence ID" value="CAH01111.1"/>
    <property type="molecule type" value="Genomic_DNA"/>
</dbReference>
<dbReference type="RefSeq" id="XP_452260.1">
    <property type="nucleotide sequence ID" value="XM_452260.1"/>
</dbReference>
<dbReference type="SMR" id="O13471"/>
<dbReference type="FunCoup" id="O13471">
    <property type="interactions" value="399"/>
</dbReference>
<dbReference type="STRING" id="284590.O13471"/>
<dbReference type="PaxDb" id="284590-O13471"/>
<dbReference type="KEGG" id="kla:KLLA0_C01452g"/>
<dbReference type="eggNOG" id="KOG2697">
    <property type="taxonomic scope" value="Eukaryota"/>
</dbReference>
<dbReference type="eggNOG" id="KOG4311">
    <property type="taxonomic scope" value="Eukaryota"/>
</dbReference>
<dbReference type="HOGENOM" id="CLU_006732_0_0_1"/>
<dbReference type="InParanoid" id="O13471"/>
<dbReference type="OMA" id="SVFIGAW"/>
<dbReference type="UniPathway" id="UPA00031">
    <property type="reaction ID" value="UER00007"/>
</dbReference>
<dbReference type="UniPathway" id="UPA00031">
    <property type="reaction ID" value="UER00008"/>
</dbReference>
<dbReference type="UniPathway" id="UPA00031">
    <property type="reaction ID" value="UER00014"/>
</dbReference>
<dbReference type="Proteomes" id="UP000000598">
    <property type="component" value="Chromosome C"/>
</dbReference>
<dbReference type="GO" id="GO:0005829">
    <property type="term" value="C:cytosol"/>
    <property type="evidence" value="ECO:0007669"/>
    <property type="project" value="TreeGrafter"/>
</dbReference>
<dbReference type="GO" id="GO:0005524">
    <property type="term" value="F:ATP binding"/>
    <property type="evidence" value="ECO:0007669"/>
    <property type="project" value="UniProtKB-KW"/>
</dbReference>
<dbReference type="GO" id="GO:0004399">
    <property type="term" value="F:histidinol dehydrogenase activity"/>
    <property type="evidence" value="ECO:0007669"/>
    <property type="project" value="UniProtKB-EC"/>
</dbReference>
<dbReference type="GO" id="GO:0046872">
    <property type="term" value="F:metal ion binding"/>
    <property type="evidence" value="ECO:0007669"/>
    <property type="project" value="UniProtKB-KW"/>
</dbReference>
<dbReference type="GO" id="GO:0051287">
    <property type="term" value="F:NAD binding"/>
    <property type="evidence" value="ECO:0007669"/>
    <property type="project" value="InterPro"/>
</dbReference>
<dbReference type="GO" id="GO:0004635">
    <property type="term" value="F:phosphoribosyl-AMP cyclohydrolase activity"/>
    <property type="evidence" value="ECO:0007669"/>
    <property type="project" value="UniProtKB-EC"/>
</dbReference>
<dbReference type="GO" id="GO:0004636">
    <property type="term" value="F:phosphoribosyl-ATP diphosphatase activity"/>
    <property type="evidence" value="ECO:0007669"/>
    <property type="project" value="UniProtKB-EC"/>
</dbReference>
<dbReference type="GO" id="GO:0000105">
    <property type="term" value="P:L-histidine biosynthetic process"/>
    <property type="evidence" value="ECO:0007669"/>
    <property type="project" value="UniProtKB-UniPathway"/>
</dbReference>
<dbReference type="CDD" id="cd06572">
    <property type="entry name" value="Histidinol_dh"/>
    <property type="match status" value="1"/>
</dbReference>
<dbReference type="CDD" id="cd11546">
    <property type="entry name" value="NTP-PPase_His4"/>
    <property type="match status" value="1"/>
</dbReference>
<dbReference type="FunFam" id="1.10.287.1080:FF:000002">
    <property type="entry name" value="Histidine biosynthesis bifunctional protein HisIE"/>
    <property type="match status" value="1"/>
</dbReference>
<dbReference type="FunFam" id="1.20.5.1300:FF:000001">
    <property type="entry name" value="Histidine biosynthesis trifunctional protein"/>
    <property type="match status" value="1"/>
</dbReference>
<dbReference type="FunFam" id="3.10.20.810:FF:000002">
    <property type="entry name" value="Histidine biosynthesis trifunctional protein"/>
    <property type="match status" value="1"/>
</dbReference>
<dbReference type="FunFam" id="3.40.50.1980:FF:000050">
    <property type="entry name" value="Histidine biosynthesis trifunctional protein"/>
    <property type="match status" value="1"/>
</dbReference>
<dbReference type="FunFam" id="3.40.50.1980:FF:000001">
    <property type="entry name" value="Histidinol dehydrogenase"/>
    <property type="match status" value="1"/>
</dbReference>
<dbReference type="Gene3D" id="1.20.5.1300">
    <property type="match status" value="1"/>
</dbReference>
<dbReference type="Gene3D" id="1.10.287.1080">
    <property type="entry name" value="MazG-like"/>
    <property type="match status" value="1"/>
</dbReference>
<dbReference type="Gene3D" id="3.40.50.1980">
    <property type="entry name" value="Nitrogenase molybdenum iron protein domain"/>
    <property type="match status" value="2"/>
</dbReference>
<dbReference type="Gene3D" id="3.10.20.810">
    <property type="entry name" value="Phosphoribosyl-AMP cyclohydrolase"/>
    <property type="match status" value="1"/>
</dbReference>
<dbReference type="HAMAP" id="MF_01024">
    <property type="entry name" value="HisD"/>
    <property type="match status" value="1"/>
</dbReference>
<dbReference type="InterPro" id="IPR016161">
    <property type="entry name" value="Ald_DH/histidinol_DH"/>
</dbReference>
<dbReference type="InterPro" id="IPR008179">
    <property type="entry name" value="HisE"/>
</dbReference>
<dbReference type="InterPro" id="IPR016298">
    <property type="entry name" value="Histidine_synth_trifunct"/>
</dbReference>
<dbReference type="InterPro" id="IPR001692">
    <property type="entry name" value="Histidinol_DH_CS"/>
</dbReference>
<dbReference type="InterPro" id="IPR012131">
    <property type="entry name" value="Hstdl_DH"/>
</dbReference>
<dbReference type="InterPro" id="IPR021130">
    <property type="entry name" value="PRib-ATP_PPHydrolase-like"/>
</dbReference>
<dbReference type="InterPro" id="IPR002496">
    <property type="entry name" value="PRib_AMP_CycHydrolase_dom"/>
</dbReference>
<dbReference type="InterPro" id="IPR038019">
    <property type="entry name" value="PRib_AMP_CycHydrolase_sf"/>
</dbReference>
<dbReference type="NCBIfam" id="TIGR00069">
    <property type="entry name" value="hisD"/>
    <property type="match status" value="1"/>
</dbReference>
<dbReference type="NCBIfam" id="TIGR03188">
    <property type="entry name" value="histidine_hisI"/>
    <property type="match status" value="1"/>
</dbReference>
<dbReference type="PANTHER" id="PTHR21256:SF2">
    <property type="entry name" value="HISTIDINE BIOSYNTHESIS TRIFUNCTIONAL PROTEIN"/>
    <property type="match status" value="1"/>
</dbReference>
<dbReference type="PANTHER" id="PTHR21256">
    <property type="entry name" value="HISTIDINOL DEHYDROGENASE HDH"/>
    <property type="match status" value="1"/>
</dbReference>
<dbReference type="Pfam" id="PF00815">
    <property type="entry name" value="Histidinol_dh"/>
    <property type="match status" value="1"/>
</dbReference>
<dbReference type="Pfam" id="PF01502">
    <property type="entry name" value="PRA-CH"/>
    <property type="match status" value="1"/>
</dbReference>
<dbReference type="Pfam" id="PF01503">
    <property type="entry name" value="PRA-PH"/>
    <property type="match status" value="1"/>
</dbReference>
<dbReference type="PIRSF" id="PIRSF001257">
    <property type="entry name" value="His_trifunctional"/>
    <property type="match status" value="1"/>
</dbReference>
<dbReference type="PRINTS" id="PR00083">
    <property type="entry name" value="HOLDHDRGNASE"/>
</dbReference>
<dbReference type="SUPFAM" id="SSF53720">
    <property type="entry name" value="ALDH-like"/>
    <property type="match status" value="1"/>
</dbReference>
<dbReference type="SUPFAM" id="SSF101386">
    <property type="entry name" value="all-alpha NTP pyrophosphatases"/>
    <property type="match status" value="1"/>
</dbReference>
<dbReference type="SUPFAM" id="SSF141734">
    <property type="entry name" value="HisI-like"/>
    <property type="match status" value="1"/>
</dbReference>
<dbReference type="PROSITE" id="PS00611">
    <property type="entry name" value="HISOL_DEHYDROGENASE"/>
    <property type="match status" value="1"/>
</dbReference>
<evidence type="ECO:0000250" key="1"/>
<evidence type="ECO:0000305" key="2"/>
<proteinExistence type="inferred from homology"/>
<protein>
    <recommendedName>
        <fullName>Histidine biosynthesis trifunctional protein</fullName>
    </recommendedName>
    <domain>
        <recommendedName>
            <fullName>Phosphoribosyl-AMP cyclohydrolase</fullName>
            <ecNumber>3.5.4.19</ecNumber>
        </recommendedName>
    </domain>
    <domain>
        <recommendedName>
            <fullName>Phosphoribosyl-ATP pyrophosphohydrolase</fullName>
            <ecNumber>3.6.1.31</ecNumber>
        </recommendedName>
    </domain>
    <domain>
        <recommendedName>
            <fullName>Histidinol dehydrogenase</fullName>
            <shortName>HDH</shortName>
            <ecNumber>1.1.1.23</ecNumber>
        </recommendedName>
    </domain>
</protein>
<sequence>MLPVVPVFNAVNALKEKTYLYLSSQLVLDGKDMTKDDILEFVQNSHGQNISVLLKDAKFEDDDLIVLLNNGVVTLFIDSDDYAAHLVEIGVPSIRLTLLKDGAYQFSFGQIQEIQQSQLVKASEISLETFTNSVLSGMKTDRPDGLYTTLVVDENERSLGLVYSNKESVSLAIETQTGIYFSRSRNEIWRKGATSGNVQKLLSIELDCDGDALKFVVRQGGSGSFCHLETESCFGNFRHGLYGLQKLLQERLLNAPEGSYTKRLFNDSDLLTAKIKEEAEELTEAVDKKDIAWECADLFYFAMARLVANGVSLEDVERNLNTKHLKITRRKGDAKPKFLKKEPVAVHEEDGKIVLNVVSASDKAAVEKAVTRPIQKTAEIMNLVNPIIENVIKNGDKALVELTAKFDGVQLETPVLEAPYPEEYLDGLTDELRDALDLSIENVKKFHAAQMQSETLDVETQPGVVCSRFPRPIEKVGLYIPGGTAILPSTALMLGVPAQVAGCKEIVFASPPRKSDGRVSPEVVYVASKVGASKIVLAGGAQAIAAMAYGTESVPKVDKILGPGNQFVTAAKMYVQNDTQALCSIDMPAGPSEVLVICDEEADVDFVASDLLSQAEHGIDSQVILVGVSLSDSKIEALQNAVHEQAMQLPRVDIVRKCIAHSSIILCDSYEEAFKMSNQYAPEHLILQISNAEDYVKDVDHAGSIFVGAYTPESCGDYSSGTNHTLPTYGYARQYSGVNTATFQKFITSQVVTPVGLEHIGHAVMSVAKVEGLDAHRNAVKIRMSKLGLLPSGFE</sequence>